<sequence length="201" mass="22852">MSAKLERLSQTLRDVLGDVVESLVVDRGEVTIEVAAGNFLDVARRLRDEAALGFEQLMDISGIDYSAFGNGAWQGKRFASVAHLLSVKNNWRLRLRVFADDDDFPVLGSLVEVWPSANWFEREAFDLYGILYAGHPDLRRILTDYGFVGHPFRKDFPISGYVEMRYDPEQGRVVYQPVTIEPRENTPRIVREENYGDVGHG</sequence>
<accession>A1K5B0</accession>
<evidence type="ECO:0000255" key="1">
    <source>
        <dbReference type="HAMAP-Rule" id="MF_01357"/>
    </source>
</evidence>
<organism>
    <name type="scientific">Azoarcus sp. (strain BH72)</name>
    <dbReference type="NCBI Taxonomy" id="418699"/>
    <lineage>
        <taxon>Bacteria</taxon>
        <taxon>Pseudomonadati</taxon>
        <taxon>Pseudomonadota</taxon>
        <taxon>Betaproteobacteria</taxon>
        <taxon>Rhodocyclales</taxon>
        <taxon>Zoogloeaceae</taxon>
        <taxon>Azoarcus</taxon>
    </lineage>
</organism>
<feature type="chain" id="PRO_0000358038" description="NADH-quinone oxidoreductase subunit C">
    <location>
        <begin position="1"/>
        <end position="201"/>
    </location>
</feature>
<proteinExistence type="inferred from homology"/>
<gene>
    <name evidence="1" type="primary">nuoC</name>
    <name type="ordered locus">azo1398</name>
</gene>
<dbReference type="EC" id="7.1.1.-" evidence="1"/>
<dbReference type="EMBL" id="AM406670">
    <property type="protein sequence ID" value="CAL94015.1"/>
    <property type="molecule type" value="Genomic_DNA"/>
</dbReference>
<dbReference type="RefSeq" id="WP_011765131.1">
    <property type="nucleotide sequence ID" value="NC_008702.1"/>
</dbReference>
<dbReference type="SMR" id="A1K5B0"/>
<dbReference type="STRING" id="62928.azo1398"/>
<dbReference type="KEGG" id="aoa:dqs_1522"/>
<dbReference type="KEGG" id="azo:azo1398"/>
<dbReference type="eggNOG" id="COG0852">
    <property type="taxonomic scope" value="Bacteria"/>
</dbReference>
<dbReference type="HOGENOM" id="CLU_042628_2_1_4"/>
<dbReference type="OrthoDB" id="9803286at2"/>
<dbReference type="Proteomes" id="UP000002588">
    <property type="component" value="Chromosome"/>
</dbReference>
<dbReference type="GO" id="GO:0005886">
    <property type="term" value="C:plasma membrane"/>
    <property type="evidence" value="ECO:0007669"/>
    <property type="project" value="UniProtKB-SubCell"/>
</dbReference>
<dbReference type="GO" id="GO:0008137">
    <property type="term" value="F:NADH dehydrogenase (ubiquinone) activity"/>
    <property type="evidence" value="ECO:0007669"/>
    <property type="project" value="InterPro"/>
</dbReference>
<dbReference type="GO" id="GO:0050136">
    <property type="term" value="F:NADH:ubiquinone reductase (non-electrogenic) activity"/>
    <property type="evidence" value="ECO:0007669"/>
    <property type="project" value="UniProtKB-UniRule"/>
</dbReference>
<dbReference type="GO" id="GO:0048038">
    <property type="term" value="F:quinone binding"/>
    <property type="evidence" value="ECO:0007669"/>
    <property type="project" value="UniProtKB-KW"/>
</dbReference>
<dbReference type="Gene3D" id="3.30.460.80">
    <property type="entry name" value="NADH:ubiquinone oxidoreductase, 30kDa subunit"/>
    <property type="match status" value="1"/>
</dbReference>
<dbReference type="HAMAP" id="MF_01357">
    <property type="entry name" value="NDH1_NuoC"/>
    <property type="match status" value="1"/>
</dbReference>
<dbReference type="InterPro" id="IPR010218">
    <property type="entry name" value="NADH_DH_suC"/>
</dbReference>
<dbReference type="InterPro" id="IPR037232">
    <property type="entry name" value="NADH_quin_OxRdtase_su_C/D-like"/>
</dbReference>
<dbReference type="InterPro" id="IPR001268">
    <property type="entry name" value="NADH_UbQ_OxRdtase_30kDa_su"/>
</dbReference>
<dbReference type="InterPro" id="IPR020396">
    <property type="entry name" value="NADH_UbQ_OxRdtase_CS"/>
</dbReference>
<dbReference type="NCBIfam" id="TIGR01961">
    <property type="entry name" value="NuoC_fam"/>
    <property type="match status" value="1"/>
</dbReference>
<dbReference type="NCBIfam" id="NF004730">
    <property type="entry name" value="PRK06074.1-1"/>
    <property type="match status" value="1"/>
</dbReference>
<dbReference type="PANTHER" id="PTHR10884:SF14">
    <property type="entry name" value="NADH DEHYDROGENASE [UBIQUINONE] IRON-SULFUR PROTEIN 3, MITOCHONDRIAL"/>
    <property type="match status" value="1"/>
</dbReference>
<dbReference type="PANTHER" id="PTHR10884">
    <property type="entry name" value="NADH DEHYDROGENASE UBIQUINONE IRON-SULFUR PROTEIN 3"/>
    <property type="match status" value="1"/>
</dbReference>
<dbReference type="Pfam" id="PF00329">
    <property type="entry name" value="Complex1_30kDa"/>
    <property type="match status" value="1"/>
</dbReference>
<dbReference type="SUPFAM" id="SSF143243">
    <property type="entry name" value="Nqo5-like"/>
    <property type="match status" value="1"/>
</dbReference>
<dbReference type="PROSITE" id="PS00542">
    <property type="entry name" value="COMPLEX1_30K"/>
    <property type="match status" value="1"/>
</dbReference>
<comment type="function">
    <text evidence="1">NDH-1 shuttles electrons from NADH, via FMN and iron-sulfur (Fe-S) centers, to quinones in the respiratory chain. The immediate electron acceptor for the enzyme in this species is believed to be ubiquinone. Couples the redox reaction to proton translocation (for every two electrons transferred, four hydrogen ions are translocated across the cytoplasmic membrane), and thus conserves the redox energy in a proton gradient.</text>
</comment>
<comment type="catalytic activity">
    <reaction evidence="1">
        <text>a quinone + NADH + 5 H(+)(in) = a quinol + NAD(+) + 4 H(+)(out)</text>
        <dbReference type="Rhea" id="RHEA:57888"/>
        <dbReference type="ChEBI" id="CHEBI:15378"/>
        <dbReference type="ChEBI" id="CHEBI:24646"/>
        <dbReference type="ChEBI" id="CHEBI:57540"/>
        <dbReference type="ChEBI" id="CHEBI:57945"/>
        <dbReference type="ChEBI" id="CHEBI:132124"/>
    </reaction>
</comment>
<comment type="subunit">
    <text evidence="1">NDH-1 is composed of 14 different subunits. Subunits NuoB, C, D, E, F, and G constitute the peripheral sector of the complex.</text>
</comment>
<comment type="subcellular location">
    <subcellularLocation>
        <location evidence="1">Cell inner membrane</location>
        <topology evidence="1">Peripheral membrane protein</topology>
        <orientation evidence="1">Cytoplasmic side</orientation>
    </subcellularLocation>
</comment>
<comment type="similarity">
    <text evidence="1">Belongs to the complex I 30 kDa subunit family.</text>
</comment>
<reference key="1">
    <citation type="journal article" date="2006" name="Nat. Biotechnol.">
        <title>Complete genome of the mutualistic, N2-fixing grass endophyte Azoarcus sp. strain BH72.</title>
        <authorList>
            <person name="Krause A."/>
            <person name="Ramakumar A."/>
            <person name="Bartels D."/>
            <person name="Battistoni F."/>
            <person name="Bekel T."/>
            <person name="Boch J."/>
            <person name="Boehm M."/>
            <person name="Friedrich F."/>
            <person name="Hurek T."/>
            <person name="Krause L."/>
            <person name="Linke B."/>
            <person name="McHardy A.C."/>
            <person name="Sarkar A."/>
            <person name="Schneiker S."/>
            <person name="Syed A.A."/>
            <person name="Thauer R."/>
            <person name="Vorhoelter F.-J."/>
            <person name="Weidner S."/>
            <person name="Puehler A."/>
            <person name="Reinhold-Hurek B."/>
            <person name="Kaiser O."/>
            <person name="Goesmann A."/>
        </authorList>
    </citation>
    <scope>NUCLEOTIDE SEQUENCE [LARGE SCALE GENOMIC DNA]</scope>
    <source>
        <strain>BH72</strain>
    </source>
</reference>
<protein>
    <recommendedName>
        <fullName evidence="1">NADH-quinone oxidoreductase subunit C</fullName>
        <ecNumber evidence="1">7.1.1.-</ecNumber>
    </recommendedName>
    <alternativeName>
        <fullName evidence="1">NADH dehydrogenase I subunit C</fullName>
    </alternativeName>
    <alternativeName>
        <fullName evidence="1">NDH-1 subunit C</fullName>
    </alternativeName>
</protein>
<keyword id="KW-0997">Cell inner membrane</keyword>
<keyword id="KW-1003">Cell membrane</keyword>
<keyword id="KW-0472">Membrane</keyword>
<keyword id="KW-0520">NAD</keyword>
<keyword id="KW-0874">Quinone</keyword>
<keyword id="KW-1185">Reference proteome</keyword>
<keyword id="KW-1278">Translocase</keyword>
<keyword id="KW-0813">Transport</keyword>
<keyword id="KW-0830">Ubiquinone</keyword>
<name>NUOC_AZOSB</name>